<comment type="catalytic activity">
    <reaction evidence="1">
        <text>L-glutamine + H2O = L-glutamate + NH4(+)</text>
        <dbReference type="Rhea" id="RHEA:15889"/>
        <dbReference type="ChEBI" id="CHEBI:15377"/>
        <dbReference type="ChEBI" id="CHEBI:28938"/>
        <dbReference type="ChEBI" id="CHEBI:29985"/>
        <dbReference type="ChEBI" id="CHEBI:58359"/>
        <dbReference type="EC" id="3.5.1.2"/>
    </reaction>
</comment>
<comment type="subunit">
    <text evidence="1">Homotetramer.</text>
</comment>
<comment type="similarity">
    <text evidence="1">Belongs to the glutaminase family.</text>
</comment>
<dbReference type="EC" id="3.5.1.2" evidence="1"/>
<dbReference type="EMBL" id="FM209186">
    <property type="protein sequence ID" value="CAW28416.1"/>
    <property type="molecule type" value="Genomic_DNA"/>
</dbReference>
<dbReference type="SMR" id="B7UV83"/>
<dbReference type="KEGG" id="pag:PLES_36891"/>
<dbReference type="HOGENOM" id="CLU_027932_1_1_6"/>
<dbReference type="GO" id="GO:0004359">
    <property type="term" value="F:glutaminase activity"/>
    <property type="evidence" value="ECO:0007669"/>
    <property type="project" value="UniProtKB-UniRule"/>
</dbReference>
<dbReference type="GO" id="GO:0006537">
    <property type="term" value="P:glutamate biosynthetic process"/>
    <property type="evidence" value="ECO:0007669"/>
    <property type="project" value="TreeGrafter"/>
</dbReference>
<dbReference type="GO" id="GO:0006543">
    <property type="term" value="P:glutamine catabolic process"/>
    <property type="evidence" value="ECO:0007669"/>
    <property type="project" value="TreeGrafter"/>
</dbReference>
<dbReference type="FunFam" id="3.40.710.10:FF:000005">
    <property type="entry name" value="Glutaminase"/>
    <property type="match status" value="1"/>
</dbReference>
<dbReference type="Gene3D" id="3.40.710.10">
    <property type="entry name" value="DD-peptidase/beta-lactamase superfamily"/>
    <property type="match status" value="1"/>
</dbReference>
<dbReference type="HAMAP" id="MF_00313">
    <property type="entry name" value="Glutaminase"/>
    <property type="match status" value="1"/>
</dbReference>
<dbReference type="InterPro" id="IPR012338">
    <property type="entry name" value="Beta-lactam/transpept-like"/>
</dbReference>
<dbReference type="InterPro" id="IPR015868">
    <property type="entry name" value="Glutaminase"/>
</dbReference>
<dbReference type="NCBIfam" id="TIGR03814">
    <property type="entry name" value="Gln_ase"/>
    <property type="match status" value="1"/>
</dbReference>
<dbReference type="NCBIfam" id="NF002132">
    <property type="entry name" value="PRK00971.1-1"/>
    <property type="match status" value="1"/>
</dbReference>
<dbReference type="NCBIfam" id="NF002133">
    <property type="entry name" value="PRK00971.1-2"/>
    <property type="match status" value="1"/>
</dbReference>
<dbReference type="PANTHER" id="PTHR12544">
    <property type="entry name" value="GLUTAMINASE"/>
    <property type="match status" value="1"/>
</dbReference>
<dbReference type="PANTHER" id="PTHR12544:SF29">
    <property type="entry name" value="GLUTAMINASE"/>
    <property type="match status" value="1"/>
</dbReference>
<dbReference type="Pfam" id="PF04960">
    <property type="entry name" value="Glutaminase"/>
    <property type="match status" value="1"/>
</dbReference>
<dbReference type="SUPFAM" id="SSF56601">
    <property type="entry name" value="beta-lactamase/transpeptidase-like"/>
    <property type="match status" value="1"/>
</dbReference>
<evidence type="ECO:0000255" key="1">
    <source>
        <dbReference type="HAMAP-Rule" id="MF_00313"/>
    </source>
</evidence>
<organism>
    <name type="scientific">Pseudomonas aeruginosa (strain LESB58)</name>
    <dbReference type="NCBI Taxonomy" id="557722"/>
    <lineage>
        <taxon>Bacteria</taxon>
        <taxon>Pseudomonadati</taxon>
        <taxon>Pseudomonadota</taxon>
        <taxon>Gammaproteobacteria</taxon>
        <taxon>Pseudomonadales</taxon>
        <taxon>Pseudomonadaceae</taxon>
        <taxon>Pseudomonas</taxon>
    </lineage>
</organism>
<reference key="1">
    <citation type="journal article" date="2009" name="Genome Res.">
        <title>Newly introduced genomic prophage islands are critical determinants of in vivo competitiveness in the Liverpool epidemic strain of Pseudomonas aeruginosa.</title>
        <authorList>
            <person name="Winstanley C."/>
            <person name="Langille M.G.I."/>
            <person name="Fothergill J.L."/>
            <person name="Kukavica-Ibrulj I."/>
            <person name="Paradis-Bleau C."/>
            <person name="Sanschagrin F."/>
            <person name="Thomson N.R."/>
            <person name="Winsor G.L."/>
            <person name="Quail M.A."/>
            <person name="Lennard N."/>
            <person name="Bignell A."/>
            <person name="Clarke L."/>
            <person name="Seeger K."/>
            <person name="Saunders D."/>
            <person name="Harris D."/>
            <person name="Parkhill J."/>
            <person name="Hancock R.E.W."/>
            <person name="Brinkman F.S.L."/>
            <person name="Levesque R.C."/>
        </authorList>
    </citation>
    <scope>NUCLEOTIDE SEQUENCE [LARGE SCALE GENOMIC DNA]</scope>
    <source>
        <strain>LESB58</strain>
    </source>
</reference>
<name>GLSA_PSEA8</name>
<accession>B7UV83</accession>
<gene>
    <name evidence="1" type="primary">glsA</name>
    <name type="ordered locus">PLES_36891</name>
</gene>
<protein>
    <recommendedName>
        <fullName evidence="1">Glutaminase</fullName>
        <ecNumber evidence="1">3.5.1.2</ecNumber>
    </recommendedName>
</protein>
<sequence length="302" mass="33012">MQQLLNEILDEVRPLIGRGKVADYIPALAGVEPNQLGIAVYSRDGELFHAGDALRPFSIQSISKVFSLVQAIQHSGEDIWQRLGHEPSGQPFNSLVQLEFERGKPRNPFINAGALVICDINQSRFAAPAQSMRDFVRRLCGNPEVVSDSVVARSEYQHRSRNAAAAYLMKSFGNFHNDVEAVLLSYFHHCALRMSCVDLARAFCFLADKGFCKHSGEQVLNERQTKQVNAIMATSGLYDEAGNFAYRVGLPGKSGVGGGIIAVVPGRFTVCVWSPELNAAGNSLAGIAALEKLSERIGWSIF</sequence>
<proteinExistence type="inferred from homology"/>
<feature type="chain" id="PRO_1000119535" description="Glutaminase">
    <location>
        <begin position="1"/>
        <end position="302"/>
    </location>
</feature>
<feature type="binding site" evidence="1">
    <location>
        <position position="61"/>
    </location>
    <ligand>
        <name>substrate</name>
    </ligand>
</feature>
<feature type="binding site" evidence="1">
    <location>
        <position position="111"/>
    </location>
    <ligand>
        <name>substrate</name>
    </ligand>
</feature>
<feature type="binding site" evidence="1">
    <location>
        <position position="155"/>
    </location>
    <ligand>
        <name>substrate</name>
    </ligand>
</feature>
<feature type="binding site" evidence="1">
    <location>
        <position position="162"/>
    </location>
    <ligand>
        <name>substrate</name>
    </ligand>
</feature>
<feature type="binding site" evidence="1">
    <location>
        <position position="186"/>
    </location>
    <ligand>
        <name>substrate</name>
    </ligand>
</feature>
<feature type="binding site" evidence="1">
    <location>
        <position position="238"/>
    </location>
    <ligand>
        <name>substrate</name>
    </ligand>
</feature>
<feature type="binding site" evidence="1">
    <location>
        <position position="256"/>
    </location>
    <ligand>
        <name>substrate</name>
    </ligand>
</feature>
<keyword id="KW-0378">Hydrolase</keyword>